<feature type="signal peptide" evidence="2">
    <location>
        <begin position="1"/>
        <end position="26"/>
    </location>
</feature>
<feature type="chain" id="PRO_0000021143" description="Eclosion hormone">
    <location>
        <begin position="27"/>
        <end position="88"/>
    </location>
</feature>
<feature type="disulfide bond" evidence="1">
    <location>
        <begin position="40"/>
        <end position="64"/>
    </location>
</feature>
<feature type="disulfide bond" evidence="1">
    <location>
        <begin position="44"/>
        <end position="60"/>
    </location>
</feature>
<feature type="disulfide bond" evidence="1">
    <location>
        <begin position="47"/>
        <end position="75"/>
    </location>
</feature>
<feature type="sequence conflict" description="In Ref. 2; AA sequence." evidence="3" ref="2">
    <original>A</original>
    <variation>S</variation>
    <location>
        <position position="31"/>
    </location>
</feature>
<feature type="sequence conflict" description="In Ref. 2; AA sequence." evidence="3" ref="2">
    <original>S</original>
    <variation>G</variation>
    <location>
        <position position="33"/>
    </location>
</feature>
<feature type="sequence conflict" description="In Ref. 2; AA sequence." evidence="3" ref="2">
    <original>Q</original>
    <variation>E</variation>
    <location>
        <position position="46"/>
    </location>
</feature>
<feature type="sequence conflict" description="In Ref. 2; AA sequence." evidence="3" ref="2">
    <original>AR</original>
    <variation>FK</variation>
    <location>
        <begin position="67"/>
        <end position="68"/>
    </location>
</feature>
<feature type="sequence conflict" description="In Ref. 2; AA sequence." evidence="3" ref="2">
    <original>KD</original>
    <variation>DL</variation>
    <location>
        <begin position="70"/>
        <end position="71"/>
    </location>
</feature>
<evidence type="ECO:0000250" key="1"/>
<evidence type="ECO:0000269" key="2">
    <source ref="2"/>
</evidence>
<evidence type="ECO:0000305" key="3"/>
<name>ECLH_BOMMO</name>
<proteinExistence type="evidence at protein level"/>
<sequence>MANKLTAVIVVALAVAFMVNLDYANCSPAIASSYDAMEICIENCAQCKKMFGPWFEGSLCAESCIKARGKDIPECESFASISPFLNKL</sequence>
<protein>
    <recommendedName>
        <fullName>Eclosion hormone</fullName>
    </recommendedName>
    <alternativeName>
        <fullName>EH</fullName>
    </alternativeName>
    <alternativeName>
        <fullName>Ecdysis activator</fullName>
    </alternativeName>
</protein>
<keyword id="KW-0903">Direct protein sequencing</keyword>
<keyword id="KW-1015">Disulfide bond</keyword>
<keyword id="KW-0372">Hormone</keyword>
<keyword id="KW-0527">Neuropeptide</keyword>
<keyword id="KW-1185">Reference proteome</keyword>
<keyword id="KW-0964">Secreted</keyword>
<keyword id="KW-0732">Signal</keyword>
<comment type="function">
    <text>Neuropeptide that triggers the performance of ecdysis behaviors at the end of a molt. It triggers adult behavior patterns: larval, pupal and adult ecdysis, and plasticization during the molt.</text>
</comment>
<comment type="subcellular location">
    <subcellularLocation>
        <location>Secreted</location>
    </subcellularLocation>
</comment>
<comment type="similarity">
    <text evidence="3">Belongs to the insect eclosion hormone family.</text>
</comment>
<organism>
    <name type="scientific">Bombyx mori</name>
    <name type="common">Silk moth</name>
    <dbReference type="NCBI Taxonomy" id="7091"/>
    <lineage>
        <taxon>Eukaryota</taxon>
        <taxon>Metazoa</taxon>
        <taxon>Ecdysozoa</taxon>
        <taxon>Arthropoda</taxon>
        <taxon>Hexapoda</taxon>
        <taxon>Insecta</taxon>
        <taxon>Pterygota</taxon>
        <taxon>Neoptera</taxon>
        <taxon>Endopterygota</taxon>
        <taxon>Lepidoptera</taxon>
        <taxon>Glossata</taxon>
        <taxon>Ditrysia</taxon>
        <taxon>Bombycoidea</taxon>
        <taxon>Bombycidae</taxon>
        <taxon>Bombycinae</taxon>
        <taxon>Bombyx</taxon>
    </lineage>
</organism>
<dbReference type="EMBL" id="D10135">
    <property type="protein sequence ID" value="BAA01012.1"/>
    <property type="molecule type" value="mRNA"/>
</dbReference>
<dbReference type="PIR" id="JS0644">
    <property type="entry name" value="JS0644"/>
</dbReference>
<dbReference type="RefSeq" id="NP_001037307.1">
    <property type="nucleotide sequence ID" value="NM_001043842.1"/>
</dbReference>
<dbReference type="RefSeq" id="XP_012553269.1">
    <property type="nucleotide sequence ID" value="XM_012697815.4"/>
</dbReference>
<dbReference type="RefSeq" id="XP_012553270.1">
    <property type="nucleotide sequence ID" value="XM_012697816.1"/>
</dbReference>
<dbReference type="RefSeq" id="XP_037867323.1">
    <property type="nucleotide sequence ID" value="XM_038011395.2"/>
</dbReference>
<dbReference type="SMR" id="P25331"/>
<dbReference type="FunCoup" id="P25331">
    <property type="interactions" value="53"/>
</dbReference>
<dbReference type="STRING" id="7091.P25331"/>
<dbReference type="PaxDb" id="7091-BGIBMGA006291-TA"/>
<dbReference type="EnsemblMetazoa" id="NM_001043842.1">
    <property type="protein sequence ID" value="NP_001037307.1"/>
    <property type="gene ID" value="GeneID_692740"/>
</dbReference>
<dbReference type="EnsemblMetazoa" id="XM_012697815.3">
    <property type="protein sequence ID" value="XP_012553269.1"/>
    <property type="gene ID" value="GeneID_692740"/>
</dbReference>
<dbReference type="EnsemblMetazoa" id="XM_038011395.1">
    <property type="protein sequence ID" value="XP_037867323.1"/>
    <property type="gene ID" value="GeneID_692740"/>
</dbReference>
<dbReference type="GeneID" id="692740"/>
<dbReference type="KEGG" id="bmor:692740"/>
<dbReference type="CTD" id="103935"/>
<dbReference type="eggNOG" id="ENOG502S767">
    <property type="taxonomic scope" value="Eukaryota"/>
</dbReference>
<dbReference type="HOGENOM" id="CLU_175797_0_0_1"/>
<dbReference type="InParanoid" id="P25331"/>
<dbReference type="OMA" id="ICIANCA"/>
<dbReference type="OrthoDB" id="404285at7088"/>
<dbReference type="Proteomes" id="UP000005204">
    <property type="component" value="Unassembled WGS sequence"/>
</dbReference>
<dbReference type="GO" id="GO:0005576">
    <property type="term" value="C:extracellular region"/>
    <property type="evidence" value="ECO:0007669"/>
    <property type="project" value="UniProtKB-SubCell"/>
</dbReference>
<dbReference type="GO" id="GO:0008255">
    <property type="term" value="F:ecdysis-triggering hormone activity"/>
    <property type="evidence" value="ECO:0007669"/>
    <property type="project" value="InterPro"/>
</dbReference>
<dbReference type="GO" id="GO:0018990">
    <property type="term" value="P:ecdysis, chitin-based cuticle"/>
    <property type="evidence" value="ECO:0007669"/>
    <property type="project" value="InterPro"/>
</dbReference>
<dbReference type="GO" id="GO:0007218">
    <property type="term" value="P:neuropeptide signaling pathway"/>
    <property type="evidence" value="ECO:0007669"/>
    <property type="project" value="UniProtKB-KW"/>
</dbReference>
<dbReference type="InterPro" id="IPR006825">
    <property type="entry name" value="Eclosion"/>
</dbReference>
<dbReference type="Pfam" id="PF04736">
    <property type="entry name" value="Eclosion"/>
    <property type="match status" value="1"/>
</dbReference>
<dbReference type="PIRSF" id="PIRSF001859">
    <property type="entry name" value="Eclosion"/>
    <property type="match status" value="1"/>
</dbReference>
<accession>P25331</accession>
<reference key="1">
    <citation type="journal article" date="1992" name="Biochem. Biophys. Res. Commun.">
        <title>Nucleotide sequence of cDNA for the eclosion hormone of the silkworm, Bombyx mori, and the expression in a brain.</title>
        <authorList>
            <person name="Kamito T."/>
            <person name="Tanaka H."/>
            <person name="Sato B."/>
            <person name="Nagasawa H."/>
            <person name="Suzuki A."/>
        </authorList>
    </citation>
    <scope>NUCLEOTIDE SEQUENCE [MRNA]</scope>
</reference>
<reference key="2">
    <citation type="journal article" date="1987" name="Agric. Biol. Chem.">
        <title>Amino acid sequence of eclosion hormone of the silkworm, Bombyx mori.</title>
        <authorList>
            <person name="Kono T."/>
            <person name="Nagasawa H."/>
            <person name="Isogai A."/>
            <person name="Fugo H."/>
            <person name="Suzuki A."/>
        </authorList>
    </citation>
    <scope>PROTEIN SEQUENCE OF 27-87</scope>
</reference>